<proteinExistence type="evidence at protein level"/>
<keyword id="KW-0002">3D-structure</keyword>
<keyword id="KW-0167">Capsid protein</keyword>
<keyword id="KW-1139">Helical capsid protein</keyword>
<keyword id="KW-1048">Host nucleus</keyword>
<keyword id="KW-0945">Host-virus interaction</keyword>
<keyword id="KW-0687">Ribonucleoprotein</keyword>
<keyword id="KW-0694">RNA-binding</keyword>
<keyword id="KW-0543">Viral nucleoprotein</keyword>
<keyword id="KW-1163">Viral penetration into host nucleus</keyword>
<keyword id="KW-0946">Virion</keyword>
<keyword id="KW-1160">Virus entry into host cell</keyword>
<organism>
    <name type="scientific">Influenza A virus (strain A/Memphis/101/1972 H3N2)</name>
    <dbReference type="NCBI Taxonomy" id="383583"/>
    <lineage>
        <taxon>Viruses</taxon>
        <taxon>Riboviria</taxon>
        <taxon>Orthornavirae</taxon>
        <taxon>Negarnaviricota</taxon>
        <taxon>Polyploviricotina</taxon>
        <taxon>Insthoviricetes</taxon>
        <taxon>Articulavirales</taxon>
        <taxon>Orthomyxoviridae</taxon>
        <taxon>Alphainfluenzavirus</taxon>
        <taxon>Alphainfluenzavirus influenzae</taxon>
        <taxon>Influenza A virus</taxon>
    </lineage>
</organism>
<comment type="function">
    <text evidence="1">Encapsidates the negative strand viral RNA, protecting it from nucleases. The encapsidated genomic RNA is termed the ribonucleoprotein (RNP) and serves as template for transcription and replication. The RNP needs to be localized in the host nucleus to start an infectious cycle, but is too large to diffuse through the nuclear pore complex. NP comprises at least 2 nuclear localization signals that are responsible for the active RNP import into the nucleus through cellular importin alpha/beta pathway. Later in the infection, nclear export of RNPs are mediated through viral proteins NEP interacting with M1 which binds nucleoproteins. It is possible that nucleoprotein binds directly host exportin-1/XPO1 and plays an active role in RNPs nuclear export. M1 interaction with RNP seems to hide nucleoprotein's nuclear localization signals. Soon after a virion infects a new cell, M1 dissociates from the RNP under acidification of the virion driven by M2 protein. Dissociation of M1 from RNP unmasks nucleoprotein's nuclear localization signals, targeting the RNP to the nucleus.</text>
</comment>
<comment type="subunit">
    <text evidence="1">Homomultimerizes to form the nucleocapsid. May bind host exportin-1/XPO1. Binds to viral genomic RNA. Protein-RNA contacts are mediated by a combination of electrostatic interactions between positively charged residues and the phosphate backbone and planar interactions between aromatic side chains and bases.</text>
</comment>
<comment type="subcellular location">
    <subcellularLocation>
        <location evidence="1">Virion</location>
    </subcellularLocation>
    <subcellularLocation>
        <location evidence="1">Host nucleus</location>
    </subcellularLocation>
</comment>
<comment type="PTM">
    <text evidence="1">Late in virus-infected cells, may be cleaved from a 56-kDa protein to a 53-kDa protein by a cellular caspase. This cleavage might be a marker for the onset of apoptosis in infected cells or have a specific function in virus host interaction.</text>
</comment>
<comment type="similarity">
    <text evidence="1">Belongs to the influenza viruses nucleoprotein family.</text>
</comment>
<name>NCAP_I72A4</name>
<protein>
    <recommendedName>
        <fullName evidence="1">Nucleoprotein</fullName>
    </recommendedName>
    <alternativeName>
        <fullName evidence="1">Nucleocapsid protein</fullName>
        <shortName evidence="1">Protein N</shortName>
    </alternativeName>
</protein>
<sequence>MASQGTKRSYEQMETDGERQNATEIRASVGKMIDGIGRFYIQMCTELKLSDYEGRLIQNSLTIERMVLSAFDERRNRYLEEHPSAGKDPKKTGGPIYKRVDGKWMRELVLYDKEEIRRIWRQANNGDDATAGLTHMMIWHSNLNDTTYQRTRALVRTGMDPRMCSLMQGSTLPRRSGAAGAAVKGVGTMVMELIRMIKRGINDRNFWRGENGRKTRGAYERMCNILKGKFQTAAQRAMMDQVRESRNPGNAEIEDLIFLARSALILRGSVAHKSCLPACVYGPAVASGYNFEKEGYSLVGIDPFKLLQNSQVYSLIRPNENPAHKSQLVWMACNSAAFEDLRLLSFIRGTKVSPRGKLSTRGVQIASNENMDTMESSTLELRSRYWAIRTRSGGNTNQQRASAGQISVQPAFSVQRNLPFDKSTIMAAFTGNTEGRTSDMRAEIIRMMEGAKPEEVSFRGRGVFELSDEKATNPIVPSFDMSNEGSYFFGDNAEEYDN</sequence>
<accession>Q08041</accession>
<accession>Q2ICQ6</accession>
<gene>
    <name evidence="1" type="primary">NP</name>
</gene>
<reference key="1">
    <citation type="journal article" date="1993" name="J. Virol.">
        <title>Analysis of the evolution and variation of the human influenza A virus nucleoprotein gene from 1933 to 1990.</title>
        <authorList>
            <person name="Shu L.L."/>
            <person name="Bean W.J."/>
            <person name="Webster R.G."/>
        </authorList>
    </citation>
    <scope>NUCLEOTIDE SEQUENCE [GENOMIC RNA]</scope>
</reference>
<reference key="2">
    <citation type="submission" date="2006-02" db="EMBL/GenBank/DDBJ databases">
        <title>The NIAID influenza genome sequencing project.</title>
        <authorList>
            <person name="Ghedin E."/>
            <person name="Spiro D."/>
            <person name="Miller N."/>
            <person name="Zaborsky J."/>
            <person name="Feldblyum T."/>
            <person name="Subbu V."/>
            <person name="Shumway M."/>
            <person name="Sparenborg J."/>
            <person name="Groveman L."/>
            <person name="Halpin R."/>
            <person name="Sitz J."/>
            <person name="Koo H."/>
            <person name="Salzberg S.L."/>
            <person name="Webster R.G."/>
            <person name="Hoffmann E."/>
            <person name="Krauss S."/>
            <person name="Naeve C."/>
            <person name="Bao Y."/>
            <person name="Bolotov P."/>
            <person name="Dernovoy D."/>
            <person name="Kiryutin B."/>
            <person name="Lipman D.J."/>
            <person name="Tatusova T."/>
        </authorList>
    </citation>
    <scope>NUCLEOTIDE SEQUENCE [GENOMIC RNA]</scope>
</reference>
<feature type="chain" id="PRO_0000079086" description="Nucleoprotein">
    <location>
        <begin position="1"/>
        <end position="498"/>
    </location>
</feature>
<feature type="region of interest" description="Disordered" evidence="2">
    <location>
        <begin position="1"/>
        <end position="21"/>
    </location>
</feature>
<feature type="short sequence motif" description="Unconventional nuclear localization signal" evidence="1">
    <location>
        <begin position="1"/>
        <end position="18"/>
    </location>
</feature>
<feature type="short sequence motif" description="Bipartite nuclear localization signal" evidence="1">
    <location>
        <begin position="198"/>
        <end position="216"/>
    </location>
</feature>
<feature type="compositionally biased region" description="Basic and acidic residues" evidence="2">
    <location>
        <begin position="8"/>
        <end position="21"/>
    </location>
</feature>
<feature type="sequence conflict" description="In Ref. 1; AAA51499." ref="1">
    <original>A</original>
    <variation>R</variation>
    <location>
        <position position="131"/>
    </location>
</feature>
<feature type="sequence conflict" description="In Ref. 1; AAA51499." ref="1">
    <original>N</original>
    <variation>D</variation>
    <location>
        <position position="290"/>
    </location>
</feature>
<feature type="sequence conflict" description="In Ref. 1; AAA51499." ref="1">
    <original>S</original>
    <variation>V</variation>
    <location>
        <position position="353"/>
    </location>
</feature>
<feature type="strand" evidence="3">
    <location>
        <begin position="422"/>
        <end position="424"/>
    </location>
</feature>
<dbReference type="EMBL" id="L07345">
    <property type="protein sequence ID" value="AAA51499.1"/>
    <property type="molecule type" value="Genomic_RNA"/>
</dbReference>
<dbReference type="EMBL" id="CY008679">
    <property type="protein sequence ID" value="ABD17327.1"/>
    <property type="molecule type" value="Genomic_RNA"/>
</dbReference>
<dbReference type="PDB" id="8EN8">
    <property type="method" value="X-ray"/>
    <property type="resolution" value="2.70 A"/>
    <property type="chains" value="C/H=418-426"/>
</dbReference>
<dbReference type="PDBsum" id="8EN8"/>
<dbReference type="SMR" id="Q08041"/>
<dbReference type="PRO" id="PR:Q08041"/>
<dbReference type="Proteomes" id="UP000009189">
    <property type="component" value="Genome"/>
</dbReference>
<dbReference type="GO" id="GO:0019029">
    <property type="term" value="C:helical viral capsid"/>
    <property type="evidence" value="ECO:0007669"/>
    <property type="project" value="UniProtKB-UniRule"/>
</dbReference>
<dbReference type="GO" id="GO:0043657">
    <property type="term" value="C:host cell"/>
    <property type="evidence" value="ECO:0007669"/>
    <property type="project" value="GOC"/>
</dbReference>
<dbReference type="GO" id="GO:0042025">
    <property type="term" value="C:host cell nucleus"/>
    <property type="evidence" value="ECO:0007669"/>
    <property type="project" value="UniProtKB-SubCell"/>
</dbReference>
<dbReference type="GO" id="GO:1990904">
    <property type="term" value="C:ribonucleoprotein complex"/>
    <property type="evidence" value="ECO:0007669"/>
    <property type="project" value="UniProtKB-KW"/>
</dbReference>
<dbReference type="GO" id="GO:0019013">
    <property type="term" value="C:viral nucleocapsid"/>
    <property type="evidence" value="ECO:0007669"/>
    <property type="project" value="UniProtKB-UniRule"/>
</dbReference>
<dbReference type="GO" id="GO:0003723">
    <property type="term" value="F:RNA binding"/>
    <property type="evidence" value="ECO:0007669"/>
    <property type="project" value="UniProtKB-UniRule"/>
</dbReference>
<dbReference type="GO" id="GO:0005198">
    <property type="term" value="F:structural molecule activity"/>
    <property type="evidence" value="ECO:0007669"/>
    <property type="project" value="UniProtKB-UniRule"/>
</dbReference>
<dbReference type="GO" id="GO:0046718">
    <property type="term" value="P:symbiont entry into host cell"/>
    <property type="evidence" value="ECO:0007669"/>
    <property type="project" value="UniProtKB-KW"/>
</dbReference>
<dbReference type="GO" id="GO:0075732">
    <property type="term" value="P:viral penetration into host nucleus"/>
    <property type="evidence" value="ECO:0007669"/>
    <property type="project" value="UniProtKB-UniRule"/>
</dbReference>
<dbReference type="HAMAP" id="MF_04070">
    <property type="entry name" value="INFV_NCAP"/>
    <property type="match status" value="1"/>
</dbReference>
<dbReference type="InterPro" id="IPR002141">
    <property type="entry name" value="Flu_NP"/>
</dbReference>
<dbReference type="Pfam" id="PF00506">
    <property type="entry name" value="Flu_NP"/>
    <property type="match status" value="1"/>
</dbReference>
<dbReference type="SUPFAM" id="SSF161003">
    <property type="entry name" value="flu NP-like"/>
    <property type="match status" value="1"/>
</dbReference>
<evidence type="ECO:0000255" key="1">
    <source>
        <dbReference type="HAMAP-Rule" id="MF_04070"/>
    </source>
</evidence>
<evidence type="ECO:0000256" key="2">
    <source>
        <dbReference type="SAM" id="MobiDB-lite"/>
    </source>
</evidence>
<evidence type="ECO:0007829" key="3">
    <source>
        <dbReference type="PDB" id="8EN8"/>
    </source>
</evidence>
<organismHost>
    <name type="scientific">Aves</name>
    <dbReference type="NCBI Taxonomy" id="8782"/>
</organismHost>
<organismHost>
    <name type="scientific">Cetacea</name>
    <name type="common">whales</name>
    <dbReference type="NCBI Taxonomy" id="9721"/>
</organismHost>
<organismHost>
    <name type="scientific">Homo sapiens</name>
    <name type="common">Human</name>
    <dbReference type="NCBI Taxonomy" id="9606"/>
</organismHost>
<organismHost>
    <name type="scientific">Phocidae</name>
    <name type="common">true seals</name>
    <dbReference type="NCBI Taxonomy" id="9709"/>
</organismHost>
<organismHost>
    <name type="scientific">Sus scrofa</name>
    <name type="common">Pig</name>
    <dbReference type="NCBI Taxonomy" id="9823"/>
</organismHost>